<comment type="function">
    <text evidence="1">Binds to the 23S rRNA.</text>
</comment>
<comment type="subunit">
    <text evidence="1">Part of the 50S ribosomal subunit.</text>
</comment>
<comment type="similarity">
    <text evidence="1">Belongs to the universal ribosomal protein uL15 family.</text>
</comment>
<sequence length="184" mass="19818">MDLSSLRPAKGAVKNKKRVGRGQGSGNGTTAGKGNKGQQARSGYKRPINEGGQIPVYRRLPKFGFTPIDRKSVTTVNLSQITRWIEQGLIENELGVIELKVLCHASNADYFKVLGNGEITAAVKITAHGFSKSAEAKITAAGGEAVTAVRTLEEAARVRDLAVEEALLKPKTKLVKRVKKNQKP</sequence>
<keyword id="KW-1185">Reference proteome</keyword>
<keyword id="KW-0687">Ribonucleoprotein</keyword>
<keyword id="KW-0689">Ribosomal protein</keyword>
<keyword id="KW-0694">RNA-binding</keyword>
<keyword id="KW-0699">rRNA-binding</keyword>
<dbReference type="EMBL" id="CP000096">
    <property type="protein sequence ID" value="ABB23088.1"/>
    <property type="molecule type" value="Genomic_DNA"/>
</dbReference>
<dbReference type="RefSeq" id="WP_011356964.1">
    <property type="nucleotide sequence ID" value="NC_007512.1"/>
</dbReference>
<dbReference type="SMR" id="Q3B6E3"/>
<dbReference type="STRING" id="319225.Plut_0200"/>
<dbReference type="KEGG" id="plt:Plut_0200"/>
<dbReference type="eggNOG" id="COG0200">
    <property type="taxonomic scope" value="Bacteria"/>
</dbReference>
<dbReference type="HOGENOM" id="CLU_055188_4_0_10"/>
<dbReference type="OrthoDB" id="9810293at2"/>
<dbReference type="Proteomes" id="UP000002709">
    <property type="component" value="Chromosome"/>
</dbReference>
<dbReference type="GO" id="GO:0022625">
    <property type="term" value="C:cytosolic large ribosomal subunit"/>
    <property type="evidence" value="ECO:0007669"/>
    <property type="project" value="TreeGrafter"/>
</dbReference>
<dbReference type="GO" id="GO:0019843">
    <property type="term" value="F:rRNA binding"/>
    <property type="evidence" value="ECO:0007669"/>
    <property type="project" value="UniProtKB-UniRule"/>
</dbReference>
<dbReference type="GO" id="GO:0003735">
    <property type="term" value="F:structural constituent of ribosome"/>
    <property type="evidence" value="ECO:0007669"/>
    <property type="project" value="InterPro"/>
</dbReference>
<dbReference type="GO" id="GO:0006412">
    <property type="term" value="P:translation"/>
    <property type="evidence" value="ECO:0007669"/>
    <property type="project" value="UniProtKB-UniRule"/>
</dbReference>
<dbReference type="Gene3D" id="3.100.10.10">
    <property type="match status" value="1"/>
</dbReference>
<dbReference type="HAMAP" id="MF_01341">
    <property type="entry name" value="Ribosomal_uL15"/>
    <property type="match status" value="1"/>
</dbReference>
<dbReference type="InterPro" id="IPR030878">
    <property type="entry name" value="Ribosomal_uL15"/>
</dbReference>
<dbReference type="InterPro" id="IPR021131">
    <property type="entry name" value="Ribosomal_uL15/eL18"/>
</dbReference>
<dbReference type="InterPro" id="IPR036227">
    <property type="entry name" value="Ribosomal_uL15/eL18_sf"/>
</dbReference>
<dbReference type="InterPro" id="IPR005749">
    <property type="entry name" value="Ribosomal_uL15_bac-type"/>
</dbReference>
<dbReference type="InterPro" id="IPR001196">
    <property type="entry name" value="Ribosomal_uL15_CS"/>
</dbReference>
<dbReference type="NCBIfam" id="TIGR01071">
    <property type="entry name" value="rplO_bact"/>
    <property type="match status" value="1"/>
</dbReference>
<dbReference type="PANTHER" id="PTHR12934">
    <property type="entry name" value="50S RIBOSOMAL PROTEIN L15"/>
    <property type="match status" value="1"/>
</dbReference>
<dbReference type="PANTHER" id="PTHR12934:SF11">
    <property type="entry name" value="LARGE RIBOSOMAL SUBUNIT PROTEIN UL15M"/>
    <property type="match status" value="1"/>
</dbReference>
<dbReference type="Pfam" id="PF00828">
    <property type="entry name" value="Ribosomal_L27A"/>
    <property type="match status" value="1"/>
</dbReference>
<dbReference type="SUPFAM" id="SSF52080">
    <property type="entry name" value="Ribosomal proteins L15p and L18e"/>
    <property type="match status" value="1"/>
</dbReference>
<dbReference type="PROSITE" id="PS00475">
    <property type="entry name" value="RIBOSOMAL_L15"/>
    <property type="match status" value="1"/>
</dbReference>
<organism>
    <name type="scientific">Chlorobium luteolum (strain DSM 273 / BCRC 81028 / 2530)</name>
    <name type="common">Pelodictyon luteolum</name>
    <dbReference type="NCBI Taxonomy" id="319225"/>
    <lineage>
        <taxon>Bacteria</taxon>
        <taxon>Pseudomonadati</taxon>
        <taxon>Chlorobiota</taxon>
        <taxon>Chlorobiia</taxon>
        <taxon>Chlorobiales</taxon>
        <taxon>Chlorobiaceae</taxon>
        <taxon>Chlorobium/Pelodictyon group</taxon>
        <taxon>Pelodictyon</taxon>
    </lineage>
</organism>
<feature type="chain" id="PRO_0000251538" description="Large ribosomal subunit protein uL15">
    <location>
        <begin position="1"/>
        <end position="184"/>
    </location>
</feature>
<feature type="region of interest" description="Disordered" evidence="2">
    <location>
        <begin position="1"/>
        <end position="50"/>
    </location>
</feature>
<feature type="compositionally biased region" description="Gly residues" evidence="2">
    <location>
        <begin position="21"/>
        <end position="35"/>
    </location>
</feature>
<gene>
    <name evidence="1" type="primary">rplO</name>
    <name type="ordered locus">Plut_0200</name>
</gene>
<proteinExistence type="inferred from homology"/>
<evidence type="ECO:0000255" key="1">
    <source>
        <dbReference type="HAMAP-Rule" id="MF_01341"/>
    </source>
</evidence>
<evidence type="ECO:0000256" key="2">
    <source>
        <dbReference type="SAM" id="MobiDB-lite"/>
    </source>
</evidence>
<evidence type="ECO:0000305" key="3"/>
<accession>Q3B6E3</accession>
<protein>
    <recommendedName>
        <fullName evidence="1">Large ribosomal subunit protein uL15</fullName>
    </recommendedName>
    <alternativeName>
        <fullName evidence="3">50S ribosomal protein L15</fullName>
    </alternativeName>
</protein>
<name>RL15_CHLL3</name>
<reference key="1">
    <citation type="submission" date="2005-08" db="EMBL/GenBank/DDBJ databases">
        <title>Complete sequence of Pelodictyon luteolum DSM 273.</title>
        <authorList>
            <consortium name="US DOE Joint Genome Institute"/>
            <person name="Copeland A."/>
            <person name="Lucas S."/>
            <person name="Lapidus A."/>
            <person name="Barry K."/>
            <person name="Detter J.C."/>
            <person name="Glavina T."/>
            <person name="Hammon N."/>
            <person name="Israni S."/>
            <person name="Pitluck S."/>
            <person name="Bryant D."/>
            <person name="Schmutz J."/>
            <person name="Larimer F."/>
            <person name="Land M."/>
            <person name="Kyrpides N."/>
            <person name="Ivanova N."/>
            <person name="Richardson P."/>
        </authorList>
    </citation>
    <scope>NUCLEOTIDE SEQUENCE [LARGE SCALE GENOMIC DNA]</scope>
    <source>
        <strain>DSM 273 / BCRC 81028 / 2530</strain>
    </source>
</reference>